<dbReference type="EC" id="2.5.1.46"/>
<dbReference type="EMBL" id="AE000666">
    <property type="protein sequence ID" value="AAB84633.1"/>
    <property type="molecule type" value="Genomic_DNA"/>
</dbReference>
<dbReference type="PIR" id="E69036">
    <property type="entry name" value="E69036"/>
</dbReference>
<dbReference type="SMR" id="O26230"/>
<dbReference type="FunCoup" id="O26230">
    <property type="interactions" value="171"/>
</dbReference>
<dbReference type="STRING" id="187420.MTH_127"/>
<dbReference type="PaxDb" id="187420-MTH_127"/>
<dbReference type="EnsemblBacteria" id="AAB84633">
    <property type="protein sequence ID" value="AAB84633"/>
    <property type="gene ID" value="MTH_127"/>
</dbReference>
<dbReference type="KEGG" id="mth:MTH_127"/>
<dbReference type="PATRIC" id="fig|187420.15.peg.100"/>
<dbReference type="HOGENOM" id="CLU_039781_0_0_2"/>
<dbReference type="InParanoid" id="O26230"/>
<dbReference type="UniPathway" id="UPA00354"/>
<dbReference type="Proteomes" id="UP000005223">
    <property type="component" value="Chromosome"/>
</dbReference>
<dbReference type="GO" id="GO:0005737">
    <property type="term" value="C:cytoplasm"/>
    <property type="evidence" value="ECO:0007669"/>
    <property type="project" value="TreeGrafter"/>
</dbReference>
<dbReference type="GO" id="GO:0034038">
    <property type="term" value="F:deoxyhypusine synthase activity"/>
    <property type="evidence" value="ECO:0007669"/>
    <property type="project" value="UniProtKB-UniRule"/>
</dbReference>
<dbReference type="Gene3D" id="3.40.910.10">
    <property type="entry name" value="Deoxyhypusine synthase"/>
    <property type="match status" value="1"/>
</dbReference>
<dbReference type="HAMAP" id="MF_00153">
    <property type="entry name" value="DHS"/>
    <property type="match status" value="1"/>
</dbReference>
<dbReference type="InterPro" id="IPR022899">
    <property type="entry name" value="Deoxyhypus_synthase_arc"/>
</dbReference>
<dbReference type="InterPro" id="IPR002773">
    <property type="entry name" value="Deoxyhypusine_synthase"/>
</dbReference>
<dbReference type="InterPro" id="IPR036982">
    <property type="entry name" value="Deoxyhypusine_synthase_sf"/>
</dbReference>
<dbReference type="InterPro" id="IPR029035">
    <property type="entry name" value="DHS-like_NAD/FAD-binding_dom"/>
</dbReference>
<dbReference type="NCBIfam" id="TIGR00321">
    <property type="entry name" value="dhys"/>
    <property type="match status" value="1"/>
</dbReference>
<dbReference type="PANTHER" id="PTHR11703">
    <property type="entry name" value="DEOXYHYPUSINE SYNTHASE"/>
    <property type="match status" value="1"/>
</dbReference>
<dbReference type="PANTHER" id="PTHR11703:SF2">
    <property type="entry name" value="DEOXYHYPUSINE SYNTHASE-LIKE PROTEIN"/>
    <property type="match status" value="1"/>
</dbReference>
<dbReference type="Pfam" id="PF01916">
    <property type="entry name" value="DS"/>
    <property type="match status" value="1"/>
</dbReference>
<dbReference type="SUPFAM" id="SSF52467">
    <property type="entry name" value="DHS-like NAD/FAD-binding domain"/>
    <property type="match status" value="1"/>
</dbReference>
<accession>O26230</accession>
<gene>
    <name type="primary">dys</name>
    <name type="ordered locus">MTH_127</name>
</gene>
<proteinExistence type="inferred from homology"/>
<sequence>MLILNVNHMNITQGMGVAELIEEMGRSGVLGAGRVHRATKLLRGMIDDLEMAIFMSVAGPLVPGGMRRIIRDLIDDGTISALITSGANLTHDLLEAFGGAHYRDYGFDDEKLHQEGIGRIGDVYTRSEDFEVFESENQEIFSSIFSAKPHISIQELIHEIGGHLDDDMSIIRTAHLRGVPIYAPGLIDSMLGLQLWMYTQDNRICLDAVKDMHSLSDLVFSHERIGAIILGGGLPKHYTLASTLLRGGVDAAVQITMDRSETGSLSGAPLEEAKSWAKAQAGSNLVTVVGDATALFPVILAGALSEL</sequence>
<feature type="chain" id="PRO_0000134500" description="Probable deoxyhypusine synthase">
    <location>
        <begin position="1"/>
        <end position="307"/>
    </location>
</feature>
<feature type="active site" description="Nucleophile" evidence="1">
    <location>
        <position position="278"/>
    </location>
</feature>
<keyword id="KW-0386">Hypusine biosynthesis</keyword>
<keyword id="KW-0520">NAD</keyword>
<keyword id="KW-1185">Reference proteome</keyword>
<keyword id="KW-0808">Transferase</keyword>
<protein>
    <recommendedName>
        <fullName>Probable deoxyhypusine synthase</fullName>
        <shortName>DHS</shortName>
        <ecNumber>2.5.1.46</ecNumber>
    </recommendedName>
</protein>
<organism>
    <name type="scientific">Methanothermobacter thermautotrophicus (strain ATCC 29096 / DSM 1053 / JCM 10044 / NBRC 100330 / Delta H)</name>
    <name type="common">Methanobacterium thermoautotrophicum</name>
    <dbReference type="NCBI Taxonomy" id="187420"/>
    <lineage>
        <taxon>Archaea</taxon>
        <taxon>Methanobacteriati</taxon>
        <taxon>Methanobacteriota</taxon>
        <taxon>Methanomada group</taxon>
        <taxon>Methanobacteria</taxon>
        <taxon>Methanobacteriales</taxon>
        <taxon>Methanobacteriaceae</taxon>
        <taxon>Methanothermobacter</taxon>
    </lineage>
</organism>
<comment type="function">
    <text evidence="1">Catalyzes the NAD-dependent oxidative cleavage of spermidine and the subsequent transfer of the butylamine moiety of spermidine to the epsilon-amino group of a specific lysine residue of the eIF-5A precursor protein to form the intermediate deoxyhypusine residue.</text>
</comment>
<comment type="catalytic activity">
    <reaction>
        <text>[eIF5A protein]-L-lysine + spermidine = [eIF5A protein]-deoxyhypusine + propane-1,3-diamine</text>
        <dbReference type="Rhea" id="RHEA:33299"/>
        <dbReference type="Rhea" id="RHEA-COMP:10143"/>
        <dbReference type="Rhea" id="RHEA-COMP:10144"/>
        <dbReference type="ChEBI" id="CHEBI:29969"/>
        <dbReference type="ChEBI" id="CHEBI:57484"/>
        <dbReference type="ChEBI" id="CHEBI:57834"/>
        <dbReference type="ChEBI" id="CHEBI:82657"/>
        <dbReference type="EC" id="2.5.1.46"/>
    </reaction>
</comment>
<comment type="cofactor">
    <cofactor evidence="1">
        <name>NAD(+)</name>
        <dbReference type="ChEBI" id="CHEBI:57540"/>
    </cofactor>
</comment>
<comment type="pathway">
    <text>Protein modification; eIF5A hypusination.</text>
</comment>
<comment type="similarity">
    <text evidence="2">Belongs to the deoxyhypusine synthase family.</text>
</comment>
<reference key="1">
    <citation type="journal article" date="1997" name="J. Bacteriol.">
        <title>Complete genome sequence of Methanobacterium thermoautotrophicum deltaH: functional analysis and comparative genomics.</title>
        <authorList>
            <person name="Smith D.R."/>
            <person name="Doucette-Stamm L.A."/>
            <person name="Deloughery C."/>
            <person name="Lee H.-M."/>
            <person name="Dubois J."/>
            <person name="Aldredge T."/>
            <person name="Bashirzadeh R."/>
            <person name="Blakely D."/>
            <person name="Cook R."/>
            <person name="Gilbert K."/>
            <person name="Harrison D."/>
            <person name="Hoang L."/>
            <person name="Keagle P."/>
            <person name="Lumm W."/>
            <person name="Pothier B."/>
            <person name="Qiu D."/>
            <person name="Spadafora R."/>
            <person name="Vicare R."/>
            <person name="Wang Y."/>
            <person name="Wierzbowski J."/>
            <person name="Gibson R."/>
            <person name="Jiwani N."/>
            <person name="Caruso A."/>
            <person name="Bush D."/>
            <person name="Safer H."/>
            <person name="Patwell D."/>
            <person name="Prabhakar S."/>
            <person name="McDougall S."/>
            <person name="Shimer G."/>
            <person name="Goyal A."/>
            <person name="Pietrovski S."/>
            <person name="Church G.M."/>
            <person name="Daniels C.J."/>
            <person name="Mao J.-I."/>
            <person name="Rice P."/>
            <person name="Noelling J."/>
            <person name="Reeve J.N."/>
        </authorList>
    </citation>
    <scope>NUCLEOTIDE SEQUENCE [LARGE SCALE GENOMIC DNA]</scope>
    <source>
        <strain>ATCC 29096 / DSM 1053 / JCM 10044 / NBRC 100330 / Delta H</strain>
    </source>
</reference>
<evidence type="ECO:0000250" key="1"/>
<evidence type="ECO:0000305" key="2"/>
<name>DHYS_METTH</name>